<dbReference type="EMBL" id="BA000019">
    <property type="protein sequence ID" value="BAB76249.1"/>
    <property type="molecule type" value="Genomic_DNA"/>
</dbReference>
<dbReference type="PIR" id="AF2374">
    <property type="entry name" value="AF2374"/>
</dbReference>
<dbReference type="RefSeq" id="WP_010998682.1">
    <property type="nucleotide sequence ID" value="NZ_RSCN01000007.1"/>
</dbReference>
<dbReference type="SMR" id="Q8YNL5"/>
<dbReference type="STRING" id="103690.gene:10496600"/>
<dbReference type="KEGG" id="ana:alr4550"/>
<dbReference type="eggNOG" id="COG3659">
    <property type="taxonomic scope" value="Bacteria"/>
</dbReference>
<dbReference type="OrthoDB" id="474791at2"/>
<dbReference type="Proteomes" id="UP000002483">
    <property type="component" value="Chromosome"/>
</dbReference>
<dbReference type="GO" id="GO:0016020">
    <property type="term" value="C:membrane"/>
    <property type="evidence" value="ECO:0007669"/>
    <property type="project" value="InterPro"/>
</dbReference>
<dbReference type="GO" id="GO:0015288">
    <property type="term" value="F:porin activity"/>
    <property type="evidence" value="ECO:0007669"/>
    <property type="project" value="InterPro"/>
</dbReference>
<dbReference type="GO" id="GO:0008643">
    <property type="term" value="P:carbohydrate transport"/>
    <property type="evidence" value="ECO:0007669"/>
    <property type="project" value="InterPro"/>
</dbReference>
<dbReference type="Gene3D" id="2.40.160.180">
    <property type="entry name" value="Carbohydrate-selective porin OprB"/>
    <property type="match status" value="1"/>
</dbReference>
<dbReference type="InterPro" id="IPR007049">
    <property type="entry name" value="Carb-sel_porin_OprB"/>
</dbReference>
<dbReference type="InterPro" id="IPR051465">
    <property type="entry name" value="Cell_Envelope_Struct_Comp"/>
</dbReference>
<dbReference type="InterPro" id="IPR038673">
    <property type="entry name" value="OprB_sf"/>
</dbReference>
<dbReference type="InterPro" id="IPR047684">
    <property type="entry name" value="Por_som-like"/>
</dbReference>
<dbReference type="InterPro" id="IPR001119">
    <property type="entry name" value="SLH_dom"/>
</dbReference>
<dbReference type="NCBIfam" id="NF033921">
    <property type="entry name" value="por_somb"/>
    <property type="match status" value="1"/>
</dbReference>
<dbReference type="PANTHER" id="PTHR43308:SF1">
    <property type="entry name" value="OUTER MEMBRANE PROTEIN ALPHA"/>
    <property type="match status" value="1"/>
</dbReference>
<dbReference type="PANTHER" id="PTHR43308">
    <property type="entry name" value="OUTER MEMBRANE PROTEIN ALPHA-RELATED"/>
    <property type="match status" value="1"/>
</dbReference>
<dbReference type="Pfam" id="PF04966">
    <property type="entry name" value="OprB"/>
    <property type="match status" value="1"/>
</dbReference>
<dbReference type="Pfam" id="PF00395">
    <property type="entry name" value="SLH"/>
    <property type="match status" value="1"/>
</dbReference>
<dbReference type="PROSITE" id="PS51272">
    <property type="entry name" value="SLH"/>
    <property type="match status" value="1"/>
</dbReference>
<organism>
    <name type="scientific">Nostoc sp. (strain PCC 7120 / SAG 25.82 / UTEX 2576)</name>
    <dbReference type="NCBI Taxonomy" id="103690"/>
    <lineage>
        <taxon>Bacteria</taxon>
        <taxon>Bacillati</taxon>
        <taxon>Cyanobacteriota</taxon>
        <taxon>Cyanophyceae</taxon>
        <taxon>Nostocales</taxon>
        <taxon>Nostocaceae</taxon>
        <taxon>Nostoc</taxon>
    </lineage>
</organism>
<comment type="similarity">
    <text evidence="3">Belongs to the OprB family.</text>
</comment>
<feature type="signal peptide" evidence="1">
    <location>
        <begin position="1"/>
        <end position="28"/>
    </location>
</feature>
<feature type="chain" id="PRO_0000366201" description="Uncharacterized protein alr4550" evidence="1">
    <location>
        <begin position="29"/>
        <end position="575"/>
    </location>
</feature>
<feature type="domain" description="SLH" evidence="2">
    <location>
        <begin position="87"/>
        <end position="151"/>
    </location>
</feature>
<feature type="coiled-coil region" evidence="1">
    <location>
        <begin position="158"/>
        <end position="196"/>
    </location>
</feature>
<protein>
    <recommendedName>
        <fullName>Uncharacterized protein alr4550</fullName>
    </recommendedName>
</protein>
<keyword id="KW-0175">Coiled coil</keyword>
<keyword id="KW-0903">Direct protein sequencing</keyword>
<keyword id="KW-1185">Reference proteome</keyword>
<keyword id="KW-0732">Signal</keyword>
<name>Y4550_NOSS1</name>
<evidence type="ECO:0000255" key="1"/>
<evidence type="ECO:0000255" key="2">
    <source>
        <dbReference type="PROSITE-ProRule" id="PRU00777"/>
    </source>
</evidence>
<evidence type="ECO:0000305" key="3"/>
<evidence type="ECO:0000312" key="4">
    <source>
        <dbReference type="EMBL" id="BAB76249.1"/>
    </source>
</evidence>
<proteinExistence type="evidence at protein level"/>
<gene>
    <name type="ordered locus">alr4550</name>
</gene>
<reference evidence="4" key="1">
    <citation type="journal article" date="2001" name="DNA Res.">
        <title>Complete genomic sequence of the filamentous nitrogen-fixing cyanobacterium Anabaena sp. strain PCC 7120.</title>
        <authorList>
            <person name="Kaneko T."/>
            <person name="Nakamura Y."/>
            <person name="Wolk C.P."/>
            <person name="Kuritz T."/>
            <person name="Sasamoto S."/>
            <person name="Watanabe A."/>
            <person name="Iriguchi M."/>
            <person name="Ishikawa A."/>
            <person name="Kawashima K."/>
            <person name="Kimura T."/>
            <person name="Kishida Y."/>
            <person name="Kohara M."/>
            <person name="Matsumoto M."/>
            <person name="Matsuno A."/>
            <person name="Muraki A."/>
            <person name="Nakazaki N."/>
            <person name="Shimpo S."/>
            <person name="Sugimoto M."/>
            <person name="Takazawa M."/>
            <person name="Yamada M."/>
            <person name="Yasuda M."/>
            <person name="Tabata S."/>
        </authorList>
    </citation>
    <scope>NUCLEOTIDE SEQUENCE [LARGE SCALE GENOMIC DNA]</scope>
    <source>
        <strain>PCC 7120 / SAG 25.82 / UTEX 2576</strain>
    </source>
</reference>
<reference evidence="3" key="2">
    <citation type="submission" date="2008-12" db="UniProtKB">
        <authorList>
            <person name="Singh H."/>
            <person name="Rajaram H."/>
            <person name="Apte S.K."/>
        </authorList>
    </citation>
    <scope>PROTEIN SEQUENCE OF 292-318</scope>
</reference>
<sequence length="575" mass="60581">MSNLLWKSLVVSPAVLGATLLVSSAAIAATNATTELSVTETVVPTELAQQPEIVAQAAPITEDTKVIDQVNRYSNEGKGNAQSQVTSVSQFSDVQPTDWAFQALQSLVERYGCIAGYPNGTYRGNRALTRYEFAAGLNACLDRVNELIATATADLVTKQDLATLQRLQEEFSAELATLRGRVDALEARTAELEANQFSTTTKLVGEAIFAVTDAFGENTGDANNTVFQNRVRLGLQTSFTGRDVLTTRLAAGNATGFDFRDNNNNSIGASGQGLQTFQVGSTGNNNVEIDRLTYEAPFGPAQVYLAASGGRHSHYAAVNNPYFFDKTDGGNGALSTFSSENPIYRIGGGAGIAFNVPFGQGGSILRPSSFTVGYLASDANNPGPNQGLFNGDYAALGQLNFSVGDRLALAATYVHGYHGASGSALFDSGANGAIVGTSLANNNSFLNASSSNSYGLSAAFRPSDKLSVSGFVSYSDVTGFGANDDREVWSYGIGVALPDFGKRGNVLGIFAGAQPYARGVQAGANEVPYQVEGFYKYRVSDNISITPGVIWVTNPGQNSNADDAIIGTLRTTFTF</sequence>
<accession>Q8YNL5</accession>